<feature type="chain" id="PRO_1000073984" description="Dihydroxy-acid dehydratase">
    <location>
        <begin position="1"/>
        <end position="573"/>
    </location>
</feature>
<feature type="active site" description="Proton acceptor" evidence="1">
    <location>
        <position position="489"/>
    </location>
</feature>
<feature type="binding site" evidence="1">
    <location>
        <position position="62"/>
    </location>
    <ligand>
        <name>[2Fe-2S] cluster</name>
        <dbReference type="ChEBI" id="CHEBI:190135"/>
    </ligand>
</feature>
<feature type="binding site" evidence="1">
    <location>
        <position position="94"/>
    </location>
    <ligand>
        <name>Mg(2+)</name>
        <dbReference type="ChEBI" id="CHEBI:18420"/>
    </ligand>
</feature>
<feature type="binding site" evidence="1">
    <location>
        <position position="135"/>
    </location>
    <ligand>
        <name>[2Fe-2S] cluster</name>
        <dbReference type="ChEBI" id="CHEBI:190135"/>
    </ligand>
</feature>
<feature type="binding site" evidence="1">
    <location>
        <position position="136"/>
    </location>
    <ligand>
        <name>Mg(2+)</name>
        <dbReference type="ChEBI" id="CHEBI:18420"/>
    </ligand>
</feature>
<feature type="binding site" description="via carbamate group" evidence="1">
    <location>
        <position position="137"/>
    </location>
    <ligand>
        <name>Mg(2+)</name>
        <dbReference type="ChEBI" id="CHEBI:18420"/>
    </ligand>
</feature>
<feature type="binding site" evidence="1">
    <location>
        <position position="212"/>
    </location>
    <ligand>
        <name>[2Fe-2S] cluster</name>
        <dbReference type="ChEBI" id="CHEBI:190135"/>
    </ligand>
</feature>
<feature type="binding site" evidence="1">
    <location>
        <position position="463"/>
    </location>
    <ligand>
        <name>Mg(2+)</name>
        <dbReference type="ChEBI" id="CHEBI:18420"/>
    </ligand>
</feature>
<feature type="modified residue" description="N6-carboxylysine" evidence="1">
    <location>
        <position position="137"/>
    </location>
</feature>
<keyword id="KW-0001">2Fe-2S</keyword>
<keyword id="KW-0028">Amino-acid biosynthesis</keyword>
<keyword id="KW-0100">Branched-chain amino acid biosynthesis</keyword>
<keyword id="KW-0408">Iron</keyword>
<keyword id="KW-0411">Iron-sulfur</keyword>
<keyword id="KW-0456">Lyase</keyword>
<keyword id="KW-0460">Magnesium</keyword>
<keyword id="KW-0479">Metal-binding</keyword>
<keyword id="KW-1185">Reference proteome</keyword>
<reference key="1">
    <citation type="journal article" date="2008" name="J. Bacteriol.">
        <title>Genome sequence of the fish pathogen Renibacterium salmoninarum suggests reductive evolution away from an environmental Arthrobacter ancestor.</title>
        <authorList>
            <person name="Wiens G.D."/>
            <person name="Rockey D.D."/>
            <person name="Wu Z."/>
            <person name="Chang J."/>
            <person name="Levy R."/>
            <person name="Crane S."/>
            <person name="Chen D.S."/>
            <person name="Capri G.R."/>
            <person name="Burnett J.R."/>
            <person name="Sudheesh P.S."/>
            <person name="Schipma M.J."/>
            <person name="Burd H."/>
            <person name="Bhattacharyya A."/>
            <person name="Rhodes L.D."/>
            <person name="Kaul R."/>
            <person name="Strom M.S."/>
        </authorList>
    </citation>
    <scope>NUCLEOTIDE SEQUENCE [LARGE SCALE GENOMIC DNA]</scope>
    <source>
        <strain>ATCC 33209 / DSM 20767 / JCM 11484 / NBRC 15589 / NCIMB 2235</strain>
    </source>
</reference>
<proteinExistence type="inferred from homology"/>
<name>ILVD_RENSM</name>
<evidence type="ECO:0000255" key="1">
    <source>
        <dbReference type="HAMAP-Rule" id="MF_00012"/>
    </source>
</evidence>
<protein>
    <recommendedName>
        <fullName evidence="1">Dihydroxy-acid dehydratase</fullName>
        <shortName evidence="1">DAD</shortName>
        <ecNumber evidence="1">4.2.1.9</ecNumber>
    </recommendedName>
</protein>
<gene>
    <name evidence="1" type="primary">ilvD</name>
    <name type="ordered locus">RSal33209_1042</name>
</gene>
<comment type="function">
    <text evidence="1">Functions in the biosynthesis of branched-chain amino acids. Catalyzes the dehydration of (2R,3R)-2,3-dihydroxy-3-methylpentanoate (2,3-dihydroxy-3-methylvalerate) into 2-oxo-3-methylpentanoate (2-oxo-3-methylvalerate) and of (2R)-2,3-dihydroxy-3-methylbutanoate (2,3-dihydroxyisovalerate) into 2-oxo-3-methylbutanoate (2-oxoisovalerate), the penultimate precursor to L-isoleucine and L-valine, respectively.</text>
</comment>
<comment type="catalytic activity">
    <reaction evidence="1">
        <text>(2R)-2,3-dihydroxy-3-methylbutanoate = 3-methyl-2-oxobutanoate + H2O</text>
        <dbReference type="Rhea" id="RHEA:24809"/>
        <dbReference type="ChEBI" id="CHEBI:11851"/>
        <dbReference type="ChEBI" id="CHEBI:15377"/>
        <dbReference type="ChEBI" id="CHEBI:49072"/>
        <dbReference type="EC" id="4.2.1.9"/>
    </reaction>
    <physiologicalReaction direction="left-to-right" evidence="1">
        <dbReference type="Rhea" id="RHEA:24810"/>
    </physiologicalReaction>
</comment>
<comment type="catalytic activity">
    <reaction evidence="1">
        <text>(2R,3R)-2,3-dihydroxy-3-methylpentanoate = (S)-3-methyl-2-oxopentanoate + H2O</text>
        <dbReference type="Rhea" id="RHEA:27694"/>
        <dbReference type="ChEBI" id="CHEBI:15377"/>
        <dbReference type="ChEBI" id="CHEBI:35146"/>
        <dbReference type="ChEBI" id="CHEBI:49258"/>
        <dbReference type="EC" id="4.2.1.9"/>
    </reaction>
    <physiologicalReaction direction="left-to-right" evidence="1">
        <dbReference type="Rhea" id="RHEA:27695"/>
    </physiologicalReaction>
</comment>
<comment type="cofactor">
    <cofactor evidence="1">
        <name>[2Fe-2S] cluster</name>
        <dbReference type="ChEBI" id="CHEBI:190135"/>
    </cofactor>
    <text evidence="1">Binds 1 [2Fe-2S] cluster per subunit. This cluster acts as a Lewis acid cofactor.</text>
</comment>
<comment type="cofactor">
    <cofactor evidence="1">
        <name>Mg(2+)</name>
        <dbReference type="ChEBI" id="CHEBI:18420"/>
    </cofactor>
</comment>
<comment type="pathway">
    <text evidence="1">Amino-acid biosynthesis; L-isoleucine biosynthesis; L-isoleucine from 2-oxobutanoate: step 3/4.</text>
</comment>
<comment type="pathway">
    <text evidence="1">Amino-acid biosynthesis; L-valine biosynthesis; L-valine from pyruvate: step 3/4.</text>
</comment>
<comment type="subunit">
    <text evidence="1">Homodimer.</text>
</comment>
<comment type="similarity">
    <text evidence="1">Belongs to the IlvD/Edd family.</text>
</comment>
<organism>
    <name type="scientific">Renibacterium salmoninarum (strain ATCC 33209 / DSM 20767 / JCM 11484 / NBRC 15589 / NCIMB 2235)</name>
    <dbReference type="NCBI Taxonomy" id="288705"/>
    <lineage>
        <taxon>Bacteria</taxon>
        <taxon>Bacillati</taxon>
        <taxon>Actinomycetota</taxon>
        <taxon>Actinomycetes</taxon>
        <taxon>Micrococcales</taxon>
        <taxon>Micrococcaceae</taxon>
        <taxon>Renibacterium</taxon>
    </lineage>
</organism>
<sequence length="573" mass="60000">MSVETSSETGNKPDIKPRSRIVTDGIAAAPARGMLRAVGFGDEDFAKPQIGVASSWNEITPCNLSLDRLAKAVKEGVHAGGGFPMIFGTISVSDGISMGHEGMHFSLVSREVIADSVETVMQAERIDGSVLLAGCDKSLPGMLMAAARLNVSSVFLYAGSIMPGWVKLEDGTEKDVTLIDAFEAVGACAAGKMSVGDLDRIERAICPGEGACGGMYTANTMACIGEALGMSLPGSAAPPSADRRRDMFAHRSGEAVVELLRRGIRSRDIMTKEAFENAIAVTMAFGGSTNAVLHLLAIAREAEVDLQLEDFNRIGDKIPHLGDLKPFGRYVMNDVDRVGGVPVIMRALLDAGLLHGDALTVTGKTLAENLEAINPPDLDGKILRALDNPIHKTGGLSVLKGSLAPGGAVVKTAGFDAEVFEGPARVFEREQGALEALKAGEIKAGDVVVIRYEGPKGGPGMREMLAITGAIKGAGLGKDVLLLTDGRFSGGTTGLCIGHVAPEAVDAGPIAFVQDGDLIRVDIPNKSFDLLVDEAELEARKIGWEPLPARFTKGVLAKYAKLVHSASEGAYCG</sequence>
<dbReference type="EC" id="4.2.1.9" evidence="1"/>
<dbReference type="EMBL" id="CP000910">
    <property type="protein sequence ID" value="ABY22780.1"/>
    <property type="molecule type" value="Genomic_DNA"/>
</dbReference>
<dbReference type="RefSeq" id="WP_012244471.1">
    <property type="nucleotide sequence ID" value="NC_010168.1"/>
</dbReference>
<dbReference type="SMR" id="A9WP05"/>
<dbReference type="STRING" id="288705.RSal33209_1042"/>
<dbReference type="KEGG" id="rsa:RSal33209_1042"/>
<dbReference type="eggNOG" id="COG0129">
    <property type="taxonomic scope" value="Bacteria"/>
</dbReference>
<dbReference type="HOGENOM" id="CLU_014271_4_2_11"/>
<dbReference type="UniPathway" id="UPA00047">
    <property type="reaction ID" value="UER00057"/>
</dbReference>
<dbReference type="UniPathway" id="UPA00049">
    <property type="reaction ID" value="UER00061"/>
</dbReference>
<dbReference type="Proteomes" id="UP000002007">
    <property type="component" value="Chromosome"/>
</dbReference>
<dbReference type="GO" id="GO:0051537">
    <property type="term" value="F:2 iron, 2 sulfur cluster binding"/>
    <property type="evidence" value="ECO:0007669"/>
    <property type="project" value="UniProtKB-UniRule"/>
</dbReference>
<dbReference type="GO" id="GO:0004160">
    <property type="term" value="F:dihydroxy-acid dehydratase activity"/>
    <property type="evidence" value="ECO:0007669"/>
    <property type="project" value="UniProtKB-UniRule"/>
</dbReference>
<dbReference type="GO" id="GO:0000287">
    <property type="term" value="F:magnesium ion binding"/>
    <property type="evidence" value="ECO:0007669"/>
    <property type="project" value="UniProtKB-UniRule"/>
</dbReference>
<dbReference type="GO" id="GO:0009097">
    <property type="term" value="P:isoleucine biosynthetic process"/>
    <property type="evidence" value="ECO:0007669"/>
    <property type="project" value="UniProtKB-UniRule"/>
</dbReference>
<dbReference type="GO" id="GO:0009099">
    <property type="term" value="P:L-valine biosynthetic process"/>
    <property type="evidence" value="ECO:0007669"/>
    <property type="project" value="UniProtKB-UniRule"/>
</dbReference>
<dbReference type="FunFam" id="3.50.30.80:FF:000001">
    <property type="entry name" value="Dihydroxy-acid dehydratase"/>
    <property type="match status" value="1"/>
</dbReference>
<dbReference type="Gene3D" id="3.50.30.80">
    <property type="entry name" value="IlvD/EDD C-terminal domain-like"/>
    <property type="match status" value="1"/>
</dbReference>
<dbReference type="HAMAP" id="MF_00012">
    <property type="entry name" value="IlvD"/>
    <property type="match status" value="1"/>
</dbReference>
<dbReference type="InterPro" id="IPR050165">
    <property type="entry name" value="DHAD_IlvD/Edd"/>
</dbReference>
<dbReference type="InterPro" id="IPR042096">
    <property type="entry name" value="Dihydro-acid_dehy_C"/>
</dbReference>
<dbReference type="InterPro" id="IPR004404">
    <property type="entry name" value="DihydroxyA_deHydtase"/>
</dbReference>
<dbReference type="InterPro" id="IPR020558">
    <property type="entry name" value="DiOHA_6PGluconate_deHydtase_CS"/>
</dbReference>
<dbReference type="InterPro" id="IPR056740">
    <property type="entry name" value="ILV_EDD_C"/>
</dbReference>
<dbReference type="InterPro" id="IPR000581">
    <property type="entry name" value="ILV_EDD_N"/>
</dbReference>
<dbReference type="InterPro" id="IPR037237">
    <property type="entry name" value="IlvD/EDD_N"/>
</dbReference>
<dbReference type="NCBIfam" id="TIGR00110">
    <property type="entry name" value="ilvD"/>
    <property type="match status" value="1"/>
</dbReference>
<dbReference type="NCBIfam" id="NF002068">
    <property type="entry name" value="PRK00911.1"/>
    <property type="match status" value="1"/>
</dbReference>
<dbReference type="PANTHER" id="PTHR21000">
    <property type="entry name" value="DIHYDROXY-ACID DEHYDRATASE DAD"/>
    <property type="match status" value="1"/>
</dbReference>
<dbReference type="PANTHER" id="PTHR21000:SF5">
    <property type="entry name" value="DIHYDROXY-ACID DEHYDRATASE, MITOCHONDRIAL"/>
    <property type="match status" value="1"/>
</dbReference>
<dbReference type="Pfam" id="PF24877">
    <property type="entry name" value="ILV_EDD_C"/>
    <property type="match status" value="1"/>
</dbReference>
<dbReference type="Pfam" id="PF00920">
    <property type="entry name" value="ILVD_EDD_N"/>
    <property type="match status" value="1"/>
</dbReference>
<dbReference type="SUPFAM" id="SSF143975">
    <property type="entry name" value="IlvD/EDD N-terminal domain-like"/>
    <property type="match status" value="1"/>
</dbReference>
<dbReference type="SUPFAM" id="SSF52016">
    <property type="entry name" value="LeuD/IlvD-like"/>
    <property type="match status" value="1"/>
</dbReference>
<dbReference type="PROSITE" id="PS00886">
    <property type="entry name" value="ILVD_EDD_1"/>
    <property type="match status" value="1"/>
</dbReference>
<dbReference type="PROSITE" id="PS00887">
    <property type="entry name" value="ILVD_EDD_2"/>
    <property type="match status" value="1"/>
</dbReference>
<accession>A9WP05</accession>